<accession>Q1CKA2</accession>
<accession>C4GRJ8</accession>
<dbReference type="EC" id="3.4.11.23" evidence="1"/>
<dbReference type="EMBL" id="CP000305">
    <property type="protein sequence ID" value="ABG17578.1"/>
    <property type="molecule type" value="Genomic_DNA"/>
</dbReference>
<dbReference type="EMBL" id="ACNQ01000008">
    <property type="protein sequence ID" value="EEO77689.1"/>
    <property type="molecule type" value="Genomic_DNA"/>
</dbReference>
<dbReference type="RefSeq" id="WP_002209829.1">
    <property type="nucleotide sequence ID" value="NZ_ACNQ01000008.1"/>
</dbReference>
<dbReference type="SMR" id="Q1CKA2"/>
<dbReference type="MEROPS" id="M17.004"/>
<dbReference type="GeneID" id="57975846"/>
<dbReference type="KEGG" id="ypn:YPN_1248"/>
<dbReference type="HOGENOM" id="CLU_013734_7_1_6"/>
<dbReference type="Proteomes" id="UP000008936">
    <property type="component" value="Chromosome"/>
</dbReference>
<dbReference type="GO" id="GO:0005737">
    <property type="term" value="C:cytoplasm"/>
    <property type="evidence" value="ECO:0007669"/>
    <property type="project" value="UniProtKB-SubCell"/>
</dbReference>
<dbReference type="GO" id="GO:0030145">
    <property type="term" value="F:manganese ion binding"/>
    <property type="evidence" value="ECO:0007669"/>
    <property type="project" value="UniProtKB-UniRule"/>
</dbReference>
<dbReference type="GO" id="GO:0070006">
    <property type="term" value="F:metalloaminopeptidase activity"/>
    <property type="evidence" value="ECO:0007669"/>
    <property type="project" value="InterPro"/>
</dbReference>
<dbReference type="GO" id="GO:0006508">
    <property type="term" value="P:proteolysis"/>
    <property type="evidence" value="ECO:0007669"/>
    <property type="project" value="UniProtKB-UniRule"/>
</dbReference>
<dbReference type="CDD" id="cd00433">
    <property type="entry name" value="Peptidase_M17"/>
    <property type="match status" value="1"/>
</dbReference>
<dbReference type="FunFam" id="3.40.630.10:FF:000037">
    <property type="entry name" value="Peptidase B"/>
    <property type="match status" value="1"/>
</dbReference>
<dbReference type="Gene3D" id="3.40.630.10">
    <property type="entry name" value="Zn peptidases"/>
    <property type="match status" value="1"/>
</dbReference>
<dbReference type="HAMAP" id="MF_00504">
    <property type="entry name" value="Aminopeptidase_M17"/>
    <property type="match status" value="1"/>
</dbReference>
<dbReference type="InterPro" id="IPR011356">
    <property type="entry name" value="Leucine_aapep/pepB"/>
</dbReference>
<dbReference type="InterPro" id="IPR047620">
    <property type="entry name" value="M17_PepB-like_N"/>
</dbReference>
<dbReference type="InterPro" id="IPR008330">
    <property type="entry name" value="Pept_M17_PepB"/>
</dbReference>
<dbReference type="InterPro" id="IPR000819">
    <property type="entry name" value="Peptidase_M17_C"/>
</dbReference>
<dbReference type="NCBIfam" id="NF003450">
    <property type="entry name" value="PRK05015.1"/>
    <property type="match status" value="1"/>
</dbReference>
<dbReference type="PANTHER" id="PTHR11963">
    <property type="entry name" value="LEUCINE AMINOPEPTIDASE-RELATED"/>
    <property type="match status" value="1"/>
</dbReference>
<dbReference type="PANTHER" id="PTHR11963:SF20">
    <property type="entry name" value="PEPTIDASE B"/>
    <property type="match status" value="1"/>
</dbReference>
<dbReference type="Pfam" id="PF12404">
    <property type="entry name" value="DUF3663"/>
    <property type="match status" value="1"/>
</dbReference>
<dbReference type="Pfam" id="PF00883">
    <property type="entry name" value="Peptidase_M17"/>
    <property type="match status" value="1"/>
</dbReference>
<dbReference type="PIRSF" id="PIRSF036388">
    <property type="entry name" value="Ctsl_amnpptdse_B"/>
    <property type="match status" value="1"/>
</dbReference>
<dbReference type="PRINTS" id="PR00481">
    <property type="entry name" value="LAMNOPPTDASE"/>
</dbReference>
<dbReference type="SUPFAM" id="SSF53187">
    <property type="entry name" value="Zn-dependent exopeptidases"/>
    <property type="match status" value="1"/>
</dbReference>
<dbReference type="PROSITE" id="PS00631">
    <property type="entry name" value="CYTOSOL_AP"/>
    <property type="match status" value="1"/>
</dbReference>
<name>PEPB_YERPN</name>
<keyword id="KW-0031">Aminopeptidase</keyword>
<keyword id="KW-0963">Cytoplasm</keyword>
<keyword id="KW-0378">Hydrolase</keyword>
<keyword id="KW-0464">Manganese</keyword>
<keyword id="KW-0479">Metal-binding</keyword>
<keyword id="KW-0645">Protease</keyword>
<comment type="function">
    <text evidence="1">Probably plays an important role in intracellular peptide degradation.</text>
</comment>
<comment type="catalytic activity">
    <reaction evidence="1">
        <text>Release of an N-terminal amino acid, Xaa, from a peptide or arylamide. Xaa is preferably Glu or Asp but may be other amino acids, including Leu, Met, His, Cys and Gln.</text>
        <dbReference type="EC" id="3.4.11.23"/>
    </reaction>
</comment>
<comment type="cofactor">
    <cofactor evidence="1">
        <name>Mn(2+)</name>
        <dbReference type="ChEBI" id="CHEBI:29035"/>
    </cofactor>
    <text evidence="1">Binds 2 manganese ions per subunit.</text>
</comment>
<comment type="subunit">
    <text evidence="1">Homohexamer.</text>
</comment>
<comment type="subcellular location">
    <subcellularLocation>
        <location evidence="1">Cytoplasm</location>
    </subcellularLocation>
</comment>
<comment type="similarity">
    <text evidence="1">Belongs to the peptidase M17 family.</text>
</comment>
<sequence>MTTEIMQISLSHNPADARWGEKALISTNDQGVTIHLTSHDQLGGIQRAARKIDGQGIKQVKLAGEGWGLEQSWAFWQGFRGPKGQRSVVWAELPANEKTELEQRLKIIDWVRDTINAPAEDLGPEQLAKNAIDLLCAVSCDAVSYRITKGEDLREQNYAGIYTVGRGSDRAPVLLALDYNPTGNPDAPVMACLVGKGITFDSGGYSLKQSAFMDSMKSDMGGAATLTGALALAAARGLKERVKLYLCCADNMVSGNAFKLGDIIRYRNGKTVEIMNTDAEGRLVLADGLIDASEQNAPLIIDAATLTGAAKTALGNDYHALFSFDDELAQALLNSAHSEHELFWRLPLAEFHRSQLPSNFAELNNVAGGAYSAGASTAAAFLSHFVKNYQQGWLHIDCSATYRKSAVDQWSAGATGLGVRTVANLLLAQAKQ</sequence>
<proteinExistence type="inferred from homology"/>
<feature type="chain" id="PRO_0000258501" description="Peptidase B">
    <location>
        <begin position="1"/>
        <end position="432"/>
    </location>
</feature>
<feature type="active site" evidence="1">
    <location>
        <position position="208"/>
    </location>
</feature>
<feature type="active site" evidence="1">
    <location>
        <position position="282"/>
    </location>
</feature>
<feature type="binding site" evidence="1">
    <location>
        <position position="196"/>
    </location>
    <ligand>
        <name>Mn(2+)</name>
        <dbReference type="ChEBI" id="CHEBI:29035"/>
        <label>2</label>
    </ligand>
</feature>
<feature type="binding site" evidence="1">
    <location>
        <position position="201"/>
    </location>
    <ligand>
        <name>Mn(2+)</name>
        <dbReference type="ChEBI" id="CHEBI:29035"/>
        <label>1</label>
    </ligand>
</feature>
<feature type="binding site" evidence="1">
    <location>
        <position position="201"/>
    </location>
    <ligand>
        <name>Mn(2+)</name>
        <dbReference type="ChEBI" id="CHEBI:29035"/>
        <label>2</label>
    </ligand>
</feature>
<feature type="binding site" evidence="1">
    <location>
        <position position="219"/>
    </location>
    <ligand>
        <name>Mn(2+)</name>
        <dbReference type="ChEBI" id="CHEBI:29035"/>
        <label>2</label>
    </ligand>
</feature>
<feature type="binding site" evidence="1">
    <location>
        <position position="278"/>
    </location>
    <ligand>
        <name>Mn(2+)</name>
        <dbReference type="ChEBI" id="CHEBI:29035"/>
        <label>1</label>
    </ligand>
</feature>
<feature type="binding site" evidence="1">
    <location>
        <position position="280"/>
    </location>
    <ligand>
        <name>Mn(2+)</name>
        <dbReference type="ChEBI" id="CHEBI:29035"/>
        <label>1</label>
    </ligand>
</feature>
<feature type="binding site" evidence="1">
    <location>
        <position position="280"/>
    </location>
    <ligand>
        <name>Mn(2+)</name>
        <dbReference type="ChEBI" id="CHEBI:29035"/>
        <label>2</label>
    </ligand>
</feature>
<gene>
    <name evidence="1" type="primary">pepB</name>
    <name type="ordered locus">YPN_1248</name>
    <name type="ORF">YP516_1369</name>
</gene>
<evidence type="ECO:0000255" key="1">
    <source>
        <dbReference type="HAMAP-Rule" id="MF_00504"/>
    </source>
</evidence>
<organism>
    <name type="scientific">Yersinia pestis bv. Antiqua (strain Nepal516)</name>
    <dbReference type="NCBI Taxonomy" id="377628"/>
    <lineage>
        <taxon>Bacteria</taxon>
        <taxon>Pseudomonadati</taxon>
        <taxon>Pseudomonadota</taxon>
        <taxon>Gammaproteobacteria</taxon>
        <taxon>Enterobacterales</taxon>
        <taxon>Yersiniaceae</taxon>
        <taxon>Yersinia</taxon>
    </lineage>
</organism>
<reference key="1">
    <citation type="journal article" date="2006" name="J. Bacteriol.">
        <title>Complete genome sequence of Yersinia pestis strains Antiqua and Nepal516: evidence of gene reduction in an emerging pathogen.</title>
        <authorList>
            <person name="Chain P.S.G."/>
            <person name="Hu P."/>
            <person name="Malfatti S.A."/>
            <person name="Radnedge L."/>
            <person name="Larimer F."/>
            <person name="Vergez L.M."/>
            <person name="Worsham P."/>
            <person name="Chu M.C."/>
            <person name="Andersen G.L."/>
        </authorList>
    </citation>
    <scope>NUCLEOTIDE SEQUENCE [LARGE SCALE GENOMIC DNA]</scope>
    <source>
        <strain>Nepal516</strain>
    </source>
</reference>
<reference key="2">
    <citation type="submission" date="2009-04" db="EMBL/GenBank/DDBJ databases">
        <title>Yersinia pestis Nepal516A whole genome shotgun sequencing project.</title>
        <authorList>
            <person name="Plunkett G. III"/>
            <person name="Anderson B.D."/>
            <person name="Baumler D.J."/>
            <person name="Burland V."/>
            <person name="Cabot E.L."/>
            <person name="Glasner J.D."/>
            <person name="Mau B."/>
            <person name="Neeno-Eckwall E."/>
            <person name="Perna N.T."/>
            <person name="Munk A.C."/>
            <person name="Tapia R."/>
            <person name="Green L.D."/>
            <person name="Rogers Y.C."/>
            <person name="Detter J.C."/>
            <person name="Bruce D.C."/>
            <person name="Brettin T.S."/>
        </authorList>
    </citation>
    <scope>NUCLEOTIDE SEQUENCE [LARGE SCALE GENOMIC DNA]</scope>
    <source>
        <strain>Nepal516</strain>
    </source>
</reference>
<protein>
    <recommendedName>
        <fullName evidence="1">Peptidase B</fullName>
        <ecNumber evidence="1">3.4.11.23</ecNumber>
    </recommendedName>
    <alternativeName>
        <fullName evidence="1">Aminopeptidase B</fullName>
    </alternativeName>
</protein>